<reference evidence="8" key="1">
    <citation type="journal article" date="2005" name="Infect. Immun.">
        <title>Whole-genome analyses of speciation events in pathogenic Brucellae.</title>
        <authorList>
            <person name="Chain P.S."/>
            <person name="Comerci D.J."/>
            <person name="Tolmasky M.E."/>
            <person name="Larimer F.W."/>
            <person name="Malfatti S.A."/>
            <person name="Vergez L.M."/>
            <person name="Aguero F."/>
            <person name="Land M.L."/>
            <person name="Ugalde R.A."/>
            <person name="Garcia E."/>
        </authorList>
    </citation>
    <scope>NUCLEOTIDE SEQUENCE [LARGE SCALE GENOMIC DNA]</scope>
    <source>
        <strain>2308</strain>
    </source>
</reference>
<reference key="2">
    <citation type="journal article" date="2008" name="PLoS Pathog.">
        <title>Brucella control of dendritic cell maturation is dependent on the TIR-containing protein Btp1.</title>
        <authorList>
            <person name="Salcedo S.P."/>
            <person name="Marchesini M.I."/>
            <person name="Lelouard H."/>
            <person name="Fugier E."/>
            <person name="Jolly G."/>
            <person name="Balor S."/>
            <person name="Muller A."/>
            <person name="Lapaque N."/>
            <person name="Demaria O."/>
            <person name="Alexopoulou L."/>
            <person name="Comerci D.J."/>
            <person name="Ugalde R.A."/>
            <person name="Pierre P."/>
            <person name="Gorvel J.P."/>
        </authorList>
    </citation>
    <scope>FUNCTION</scope>
    <scope>DISRUPTION PHENOTYPE</scope>
    <source>
        <strain>2308</strain>
    </source>
</reference>
<keyword id="KW-1032">Host cell membrane</keyword>
<keyword id="KW-1043">Host membrane</keyword>
<keyword id="KW-0378">Hydrolase</keyword>
<keyword id="KW-0446">Lipid-binding</keyword>
<keyword id="KW-0472">Membrane</keyword>
<keyword id="KW-0520">NAD</keyword>
<keyword id="KW-1185">Reference proteome</keyword>
<keyword id="KW-0964">Secreted</keyword>
<keyword id="KW-0843">Virulence</keyword>
<organism>
    <name type="scientific">Brucella abortus (strain 2308)</name>
    <dbReference type="NCBI Taxonomy" id="359391"/>
    <lineage>
        <taxon>Bacteria</taxon>
        <taxon>Pseudomonadati</taxon>
        <taxon>Pseudomonadota</taxon>
        <taxon>Alphaproteobacteria</taxon>
        <taxon>Hyphomicrobiales</taxon>
        <taxon>Brucellaceae</taxon>
        <taxon>Brucella/Ochrobactrum group</taxon>
        <taxon>Brucella</taxon>
    </lineage>
</organism>
<dbReference type="EC" id="3.2.2.-" evidence="1"/>
<dbReference type="EC" id="3.2.2.6" evidence="2"/>
<dbReference type="EMBL" id="AM040264">
    <property type="protein sequence ID" value="CAJ10235.1"/>
    <property type="molecule type" value="Genomic_DNA"/>
</dbReference>
<dbReference type="SMR" id="Q2YPC4"/>
<dbReference type="KEGG" id="bmf:BAB1_0279"/>
<dbReference type="HOGENOM" id="CLU_086674_0_0_5"/>
<dbReference type="Proteomes" id="UP000002719">
    <property type="component" value="Chromosome I"/>
</dbReference>
<dbReference type="GO" id="GO:0005576">
    <property type="term" value="C:extracellular region"/>
    <property type="evidence" value="ECO:0007669"/>
    <property type="project" value="UniProtKB-SubCell"/>
</dbReference>
<dbReference type="GO" id="GO:0020002">
    <property type="term" value="C:host cell plasma membrane"/>
    <property type="evidence" value="ECO:0007669"/>
    <property type="project" value="UniProtKB-SubCell"/>
</dbReference>
<dbReference type="GO" id="GO:0016020">
    <property type="term" value="C:membrane"/>
    <property type="evidence" value="ECO:0007669"/>
    <property type="project" value="UniProtKB-KW"/>
</dbReference>
<dbReference type="GO" id="GO:0016787">
    <property type="term" value="F:hydrolase activity"/>
    <property type="evidence" value="ECO:0007669"/>
    <property type="project" value="UniProtKB-KW"/>
</dbReference>
<dbReference type="GO" id="GO:0008289">
    <property type="term" value="F:lipid binding"/>
    <property type="evidence" value="ECO:0007669"/>
    <property type="project" value="UniProtKB-KW"/>
</dbReference>
<dbReference type="GO" id="GO:0007165">
    <property type="term" value="P:signal transduction"/>
    <property type="evidence" value="ECO:0007669"/>
    <property type="project" value="InterPro"/>
</dbReference>
<dbReference type="GO" id="GO:0052025">
    <property type="term" value="P:symbiont-mediated perturbation of host cell endomembrane system"/>
    <property type="evidence" value="ECO:0000269"/>
    <property type="project" value="SigSci"/>
</dbReference>
<dbReference type="GO" id="GO:0039722">
    <property type="term" value="P:symbiont-mediated suppression of host toll-like receptor signaling pathway"/>
    <property type="evidence" value="ECO:0000269"/>
    <property type="project" value="SigSci"/>
</dbReference>
<dbReference type="Gene3D" id="3.40.50.10140">
    <property type="entry name" value="Toll/interleukin-1 receptor homology (TIR) domain"/>
    <property type="match status" value="1"/>
</dbReference>
<dbReference type="InterPro" id="IPR000157">
    <property type="entry name" value="TIR_dom"/>
</dbReference>
<dbReference type="InterPro" id="IPR035897">
    <property type="entry name" value="Toll_tir_struct_dom_sf"/>
</dbReference>
<dbReference type="PANTHER" id="PTHR32009:SF39">
    <property type="entry name" value="TIR DOMAIN-CONTAINING PROTEIN"/>
    <property type="match status" value="1"/>
</dbReference>
<dbReference type="PANTHER" id="PTHR32009">
    <property type="entry name" value="TMV RESISTANCE PROTEIN N-LIKE"/>
    <property type="match status" value="1"/>
</dbReference>
<dbReference type="Pfam" id="PF13676">
    <property type="entry name" value="TIR_2"/>
    <property type="match status" value="1"/>
</dbReference>
<dbReference type="SMART" id="SM00255">
    <property type="entry name" value="TIR"/>
    <property type="match status" value="1"/>
</dbReference>
<dbReference type="SUPFAM" id="SSF52200">
    <property type="entry name" value="Toll/Interleukin receptor TIR domain"/>
    <property type="match status" value="1"/>
</dbReference>
<dbReference type="PROSITE" id="PS50104">
    <property type="entry name" value="TIR"/>
    <property type="match status" value="1"/>
</dbReference>
<gene>
    <name evidence="6" type="primary">btp1</name>
    <name type="synonym">btpA</name>
    <name type="synonym">tcpB</name>
    <name evidence="8" type="ordered locus">BAB1_0279</name>
</gene>
<sequence>MSKEKQAQSKAHKAQQAISSAKSLSTQKSKMSELERATRDGAAIGKKRADIAKKIADKAKQLSSYQAKQFKADEQAVKKVAQEQKRLSDERTKHEAFIKQSLSSMRTTASATMEAEEEYDFFISHASEDKEAFVQDLAAALRDLGAKIFYDAYTLKVGDSLRRKIDQGLANSKFGIVVLSEHFFSKQWPARELDGLTAMEIGGQTRILPIWHKVSYDEVRRFSPSLADKVALNTSLKSVEEIAKELHSLI</sequence>
<name>TCPB_BRUA2</name>
<comment type="function">
    <text evidence="2 5">Virulence factor that interferes with host Toll-like receptor 2 (TLR2) signaling, resulting in the reduction of dendritic cell maturation, inhibition of pro-inflammatory cytokine secretion and impaired NF-kappa-B activation in macrophages (PubMed:18266466). Also acts on host TLR4. Binds host lipids. Has NAD(+) hydrolase (NADase) activity, catalyzes cleavage of NAD(+) into ADP-D-ribose (ADPR) and nicotinamide, also generates a cyclization variant of cyclic ADPR (cADPR), termed v-cADPR (probably 2'cADPR) (By similarity).</text>
</comment>
<comment type="catalytic activity">
    <reaction evidence="2">
        <text>NAD(+) + H2O = ADP-D-ribose + nicotinamide + H(+)</text>
        <dbReference type="Rhea" id="RHEA:16301"/>
        <dbReference type="ChEBI" id="CHEBI:15377"/>
        <dbReference type="ChEBI" id="CHEBI:15378"/>
        <dbReference type="ChEBI" id="CHEBI:17154"/>
        <dbReference type="ChEBI" id="CHEBI:57540"/>
        <dbReference type="ChEBI" id="CHEBI:57967"/>
        <dbReference type="EC" id="3.2.2.6"/>
    </reaction>
    <physiologicalReaction direction="left-to-right" evidence="2">
        <dbReference type="Rhea" id="RHEA:16302"/>
    </physiologicalReaction>
</comment>
<comment type="catalytic activity">
    <reaction evidence="1 2">
        <text>NAD(+) = 2'cADPR + nicotinamide + H(+)</text>
        <dbReference type="Rhea" id="RHEA:75299"/>
        <dbReference type="ChEBI" id="CHEBI:15378"/>
        <dbReference type="ChEBI" id="CHEBI:17154"/>
        <dbReference type="ChEBI" id="CHEBI:57540"/>
        <dbReference type="ChEBI" id="CHEBI:194248"/>
    </reaction>
</comment>
<comment type="subunit">
    <text evidence="2">Homodimer. Interacts with host TIRAP. Interacts with host TLR4, abolishes the interaction of host TIRAP with TLR4.</text>
</comment>
<comment type="subcellular location">
    <subcellularLocation>
        <location evidence="2">Secreted</location>
    </subcellularLocation>
    <subcellularLocation>
        <location evidence="2">Host cell membrane</location>
    </subcellularLocation>
    <text evidence="7">Translocated into the host cell via the type IV secretion system (T4SS).</text>
</comment>
<comment type="domain">
    <text evidence="2">The TIR domain mediates NAD(+) hydrolase (NADase) activity. The N-terminal region is required for localization to the host cell membrane.</text>
</comment>
<comment type="disruption phenotype">
    <text evidence="5">Grows as well as wild-type in mouse C57BL/6 dendritic cells, decreased activation of mouse dendritic cells compared to wild-type bacteria. Increased host expression and secretion of TNF-alpha and to a lesser extent IL-12 compared to wild-type bacteria.</text>
</comment>
<proteinExistence type="inferred from homology"/>
<evidence type="ECO:0000250" key="1">
    <source>
        <dbReference type="UniProtKB" id="A0A009IHW8"/>
    </source>
</evidence>
<evidence type="ECO:0000250" key="2">
    <source>
        <dbReference type="UniProtKB" id="Q8YF53"/>
    </source>
</evidence>
<evidence type="ECO:0000255" key="3">
    <source>
        <dbReference type="PROSITE-ProRule" id="PRU00204"/>
    </source>
</evidence>
<evidence type="ECO:0000256" key="4">
    <source>
        <dbReference type="SAM" id="MobiDB-lite"/>
    </source>
</evidence>
<evidence type="ECO:0000269" key="5">
    <source>
    </source>
</evidence>
<evidence type="ECO:0000303" key="6">
    <source>
    </source>
</evidence>
<evidence type="ECO:0000305" key="7"/>
<evidence type="ECO:0000312" key="8">
    <source>
        <dbReference type="EMBL" id="CAJ10235.1"/>
    </source>
</evidence>
<accession>Q2YPC4</accession>
<feature type="chain" id="PRO_0000458019" description="Probable 2' cyclic ADP-D-ribose synthase TcpB">
    <location>
        <begin position="1"/>
        <end position="250"/>
    </location>
</feature>
<feature type="domain" description="TIR" evidence="3">
    <location>
        <begin position="117"/>
        <end position="250"/>
    </location>
</feature>
<feature type="region of interest" description="Disordered" evidence="4">
    <location>
        <begin position="1"/>
        <end position="46"/>
    </location>
</feature>
<feature type="compositionally biased region" description="Low complexity" evidence="4">
    <location>
        <begin position="14"/>
        <end position="23"/>
    </location>
</feature>
<feature type="compositionally biased region" description="Basic and acidic residues" evidence="4">
    <location>
        <begin position="30"/>
        <end position="39"/>
    </location>
</feature>
<feature type="active site" evidence="3">
    <location>
        <position position="192"/>
    </location>
</feature>
<protein>
    <recommendedName>
        <fullName evidence="7">Probable 2' cyclic ADP-D-ribose synthase TcpB</fullName>
        <shortName evidence="7">2'cADPR synthase TcpB</shortName>
        <ecNumber evidence="1">3.2.2.-</ecNumber>
    </recommendedName>
    <alternativeName>
        <fullName evidence="6">Brucella TIR-containing protein 1</fullName>
        <shortName evidence="6">Btp1</shortName>
    </alternativeName>
    <alternativeName>
        <fullName evidence="2">NAD(+) hydrolase TcpB</fullName>
        <ecNumber evidence="2">3.2.2.6</ecNumber>
    </alternativeName>
</protein>